<comment type="function">
    <text evidence="2 3 4 5 9 10">Catalyzes the isomerization between 2-isopropylmalate and 3-isopropylmalate, via the formation of 2-isopropylmaleate (PubMed:19597944). Plays an essential role in leucine biosynthesis (PubMed:19597944, PubMed:20663849, PubMed:24608865, PubMed:32612621). Functions in both the biosynthesis of leucine, and in the methionine chain elongation pathway of aliphatic glucosinolate formation (PubMed:24608865). Plays an essential role in female gametophyte development (PubMed:19597944, PubMed:20663849, PubMed:24608865).</text>
</comment>
<comment type="catalytic activity">
    <reaction evidence="2">
        <text>(2R,3S)-3-isopropylmalate = (2S)-2-isopropylmalate</text>
        <dbReference type="Rhea" id="RHEA:32287"/>
        <dbReference type="ChEBI" id="CHEBI:1178"/>
        <dbReference type="ChEBI" id="CHEBI:35121"/>
        <dbReference type="EC" id="4.2.1.33"/>
    </reaction>
</comment>
<comment type="pathway">
    <text evidence="8">Amino-acid biosynthesis; L-leucine biosynthesis; L-leucine from 3-methyl-2-oxobutanoate: step 2/4.</text>
</comment>
<comment type="subunit">
    <text evidence="3">Heterodimer of the large LEUC/IIL1 subunit and the small LEUD (SSU1, SSU2 or SSU3) subunits.</text>
</comment>
<comment type="subcellular location">
    <subcellularLocation>
        <location evidence="3">Plastid</location>
        <location evidence="3">Chloroplast stroma</location>
    </subcellularLocation>
    <subcellularLocation>
        <location evidence="5">Plastid</location>
    </subcellularLocation>
</comment>
<comment type="alternative products">
    <event type="alternative splicing"/>
    <isoform>
        <id>Q9ZW85-1</id>
        <name>1</name>
        <sequence type="displayed"/>
    </isoform>
    <text>A number of isoforms are produced. According to EST sequences.</text>
</comment>
<comment type="tissue specificity">
    <text evidence="4 5">Expressed at low levels in roots, root tips, at the basis of the hypocotyls, and in emerging leaves (PubMed:24608865). In young seedlings, expressed in cotyledon epidermal cells (PubMed:32612621). In hypocotyls, expressed in peripheral cells (PubMed:32612621). In seedling roots, expressed in the epidermis, including root hairs, and throughout the cortex (PubMed:32612621). In rosette leaves, expressed in the upper and lower epidermis (PubMed:32612621). In roots of adult plants, expressed in the root tips and cortex of the mature root enclosing the stele (PubMed:32612621). In flowering stalks, expressed in the epidermis (PubMed:32612621). Expressed in the carpel epidermis (PubMed:32612621).</text>
</comment>
<comment type="disruption phenotype">
    <text evidence="2 3">Embryonic lethality when homozygous.</text>
</comment>
<comment type="miscellaneous">
    <text evidence="4">Plants silencing SSU1 exhibit stunted growth, narrow pale leaf blades with green vasculature, abnormal leaf adaxial-abaxial patterning, and abnormal flower morphology.</text>
</comment>
<comment type="similarity">
    <text evidence="8">Belongs to the LeuD family.</text>
</comment>
<proteinExistence type="evidence at protein level"/>
<organism>
    <name type="scientific">Arabidopsis thaliana</name>
    <name type="common">Mouse-ear cress</name>
    <dbReference type="NCBI Taxonomy" id="3702"/>
    <lineage>
        <taxon>Eukaryota</taxon>
        <taxon>Viridiplantae</taxon>
        <taxon>Streptophyta</taxon>
        <taxon>Embryophyta</taxon>
        <taxon>Tracheophyta</taxon>
        <taxon>Spermatophyta</taxon>
        <taxon>Magnoliopsida</taxon>
        <taxon>eudicotyledons</taxon>
        <taxon>Gunneridae</taxon>
        <taxon>Pentapetalae</taxon>
        <taxon>rosids</taxon>
        <taxon>malvids</taxon>
        <taxon>Brassicales</taxon>
        <taxon>Brassicaceae</taxon>
        <taxon>Camelineae</taxon>
        <taxon>Arabidopsis</taxon>
    </lineage>
</organism>
<feature type="transit peptide" description="Chloroplast" evidence="1">
    <location>
        <begin position="1"/>
        <end position="59"/>
    </location>
</feature>
<feature type="chain" id="PRO_0000425812" description="3-isopropylmalate dehydratase small subunit 1">
    <location>
        <begin position="60"/>
        <end position="251"/>
    </location>
</feature>
<keyword id="KW-0025">Alternative splicing</keyword>
<keyword id="KW-0028">Amino-acid biosynthesis</keyword>
<keyword id="KW-0100">Branched-chain amino acid biosynthesis</keyword>
<keyword id="KW-0150">Chloroplast</keyword>
<keyword id="KW-0432">Leucine biosynthesis</keyword>
<keyword id="KW-0456">Lyase</keyword>
<keyword id="KW-0934">Plastid</keyword>
<keyword id="KW-1185">Reference proteome</keyword>
<keyword id="KW-0809">Transit peptide</keyword>
<protein>
    <recommendedName>
        <fullName evidence="8">3-isopropylmalate dehydratase small subunit 1</fullName>
        <ecNumber evidence="2">4.2.1.33</ecNumber>
    </recommendedName>
    <alternativeName>
        <fullName evidence="7">AtLEUD3</fullName>
    </alternativeName>
    <alternativeName>
        <fullName evidence="6">Isopropylmalate isomerase small subunit 1</fullName>
        <shortName evidence="6">IPMI SSU1</shortName>
    </alternativeName>
</protein>
<reference key="1">
    <citation type="journal article" date="1999" name="Nature">
        <title>Sequence and analysis of chromosome 2 of the plant Arabidopsis thaliana.</title>
        <authorList>
            <person name="Lin X."/>
            <person name="Kaul S."/>
            <person name="Rounsley S.D."/>
            <person name="Shea T.P."/>
            <person name="Benito M.-I."/>
            <person name="Town C.D."/>
            <person name="Fujii C.Y."/>
            <person name="Mason T.M."/>
            <person name="Bowman C.L."/>
            <person name="Barnstead M.E."/>
            <person name="Feldblyum T.V."/>
            <person name="Buell C.R."/>
            <person name="Ketchum K.A."/>
            <person name="Lee J.J."/>
            <person name="Ronning C.M."/>
            <person name="Koo H.L."/>
            <person name="Moffat K.S."/>
            <person name="Cronin L.A."/>
            <person name="Shen M."/>
            <person name="Pai G."/>
            <person name="Van Aken S."/>
            <person name="Umayam L."/>
            <person name="Tallon L.J."/>
            <person name="Gill J.E."/>
            <person name="Adams M.D."/>
            <person name="Carrera A.J."/>
            <person name="Creasy T.H."/>
            <person name="Goodman H.M."/>
            <person name="Somerville C.R."/>
            <person name="Copenhaver G.P."/>
            <person name="Preuss D."/>
            <person name="Nierman W.C."/>
            <person name="White O."/>
            <person name="Eisen J.A."/>
            <person name="Salzberg S.L."/>
            <person name="Fraser C.M."/>
            <person name="Venter J.C."/>
        </authorList>
    </citation>
    <scope>NUCLEOTIDE SEQUENCE [LARGE SCALE GENOMIC DNA]</scope>
    <source>
        <strain>cv. Columbia</strain>
    </source>
</reference>
<reference key="2">
    <citation type="journal article" date="2017" name="Plant J.">
        <title>Araport11: a complete reannotation of the Arabidopsis thaliana reference genome.</title>
        <authorList>
            <person name="Cheng C.Y."/>
            <person name="Krishnakumar V."/>
            <person name="Chan A.P."/>
            <person name="Thibaud-Nissen F."/>
            <person name="Schobel S."/>
            <person name="Town C.D."/>
        </authorList>
    </citation>
    <scope>GENOME REANNOTATION</scope>
    <source>
        <strain>cv. Columbia</strain>
    </source>
</reference>
<reference key="3">
    <citation type="journal article" date="2003" name="Science">
        <title>Empirical analysis of transcriptional activity in the Arabidopsis genome.</title>
        <authorList>
            <person name="Yamada K."/>
            <person name="Lim J."/>
            <person name="Dale J.M."/>
            <person name="Chen H."/>
            <person name="Shinn P."/>
            <person name="Palm C.J."/>
            <person name="Southwick A.M."/>
            <person name="Wu H.C."/>
            <person name="Kim C.J."/>
            <person name="Nguyen M."/>
            <person name="Pham P.K."/>
            <person name="Cheuk R.F."/>
            <person name="Karlin-Newmann G."/>
            <person name="Liu S.X."/>
            <person name="Lam B."/>
            <person name="Sakano H."/>
            <person name="Wu T."/>
            <person name="Yu G."/>
            <person name="Miranda M."/>
            <person name="Quach H.L."/>
            <person name="Tripp M."/>
            <person name="Chang C.H."/>
            <person name="Lee J.M."/>
            <person name="Toriumi M.J."/>
            <person name="Chan M.M."/>
            <person name="Tang C.C."/>
            <person name="Onodera C.S."/>
            <person name="Deng J.M."/>
            <person name="Akiyama K."/>
            <person name="Ansari Y."/>
            <person name="Arakawa T."/>
            <person name="Banh J."/>
            <person name="Banno F."/>
            <person name="Bowser L."/>
            <person name="Brooks S.Y."/>
            <person name="Carninci P."/>
            <person name="Chao Q."/>
            <person name="Choy N."/>
            <person name="Enju A."/>
            <person name="Goldsmith A.D."/>
            <person name="Gurjal M."/>
            <person name="Hansen N.F."/>
            <person name="Hayashizaki Y."/>
            <person name="Johnson-Hopson C."/>
            <person name="Hsuan V.W."/>
            <person name="Iida K."/>
            <person name="Karnes M."/>
            <person name="Khan S."/>
            <person name="Koesema E."/>
            <person name="Ishida J."/>
            <person name="Jiang P.X."/>
            <person name="Jones T."/>
            <person name="Kawai J."/>
            <person name="Kamiya A."/>
            <person name="Meyers C."/>
            <person name="Nakajima M."/>
            <person name="Narusaka M."/>
            <person name="Seki M."/>
            <person name="Sakurai T."/>
            <person name="Satou M."/>
            <person name="Tamse R."/>
            <person name="Vaysberg M."/>
            <person name="Wallender E.K."/>
            <person name="Wong C."/>
            <person name="Yamamura Y."/>
            <person name="Yuan S."/>
            <person name="Shinozaki K."/>
            <person name="Davis R.W."/>
            <person name="Theologis A."/>
            <person name="Ecker J.R."/>
        </authorList>
    </citation>
    <scope>NUCLEOTIDE SEQUENCE [LARGE SCALE MRNA]</scope>
    <source>
        <strain>cv. Columbia</strain>
    </source>
</reference>
<reference key="4">
    <citation type="submission" date="2002-03" db="EMBL/GenBank/DDBJ databases">
        <title>Full-length cDNA from Arabidopsis thaliana.</title>
        <authorList>
            <person name="Brover V.V."/>
            <person name="Troukhan M.E."/>
            <person name="Alexandrov N.A."/>
            <person name="Lu Y.-P."/>
            <person name="Flavell R.B."/>
            <person name="Feldmann K.A."/>
        </authorList>
    </citation>
    <scope>NUCLEOTIDE SEQUENCE [LARGE SCALE MRNA]</scope>
</reference>
<reference key="5">
    <citation type="journal article" date="2009" name="Plant Mol. Biol.">
        <title>Arabidopsis thaliana encodes a bacterial-type heterodimeric isopropylmalate isomerase involved in both Leu biosynthesis and the Met chain elongation pathway of glucosinolate formation.</title>
        <authorList>
            <person name="Knill T."/>
            <person name="Reichelt M."/>
            <person name="Paetz C."/>
            <person name="Gershenzon J."/>
            <person name="Binder S."/>
        </authorList>
    </citation>
    <scope>FUNCTION</scope>
    <scope>CATALYTIC ACTIVITY</scope>
    <scope>DISRUPTION PHENOTYPE</scope>
</reference>
<reference key="6">
    <citation type="journal article" date="2010" name="Plant Cell Physiol.">
        <title>Functional specification of Arabidopsis isopropylmalate isomerases in glucosinolate and leucine biosynthesis.</title>
        <authorList>
            <person name="He Y."/>
            <person name="Chen B."/>
            <person name="Pang Q."/>
            <person name="Strul J.M."/>
            <person name="Chen S."/>
        </authorList>
    </citation>
    <scope>FUNCTION</scope>
    <scope>SUBUNIT</scope>
    <scope>SUBCELLULAR LOCATION</scope>
    <scope>TISSUE SPECIFICITY</scope>
    <scope>DISRUPTION PHENOTYPE</scope>
</reference>
<reference key="7">
    <citation type="journal article" date="2014" name="PLoS ONE">
        <title>The small subunit 1 of the Arabidopsis isopropylmalate isomerase is required for normal growth and development and the early stages of glucosinolate formation.</title>
        <authorList>
            <person name="Imhof J."/>
            <person name="Huber F."/>
            <person name="Reichelt M."/>
            <person name="Gershenzon J."/>
            <person name="Wiegreffe C."/>
            <person name="Laechler K."/>
            <person name="Binder S."/>
        </authorList>
    </citation>
    <scope>FUNCTION</scope>
    <scope>TISSUE SPECIFICITY</scope>
</reference>
<reference key="8">
    <citation type="journal article" date="2020" name="Front. Plant Sci.">
        <title>In Arabidopsis thaliana substrate recognition and tissue- as well as plastid type-specific expression define the roles of distinct small subunits of isopropylmalate isomerase.</title>
        <authorList>
            <person name="Laechler K."/>
            <person name="Clauss K."/>
            <person name="Imhof J."/>
            <person name="Crocoll C."/>
            <person name="Schulz A."/>
            <person name="Halkier B.A."/>
            <person name="Binder S."/>
        </authorList>
    </citation>
    <scope>FUNCTION</scope>
    <scope>SUBCELLULAR LOCATION</scope>
    <scope>TISSUE SPECIFICITY</scope>
</reference>
<dbReference type="EC" id="4.2.1.33" evidence="2"/>
<dbReference type="EMBL" id="AC004450">
    <property type="protein sequence ID" value="AAC64298.1"/>
    <property type="molecule type" value="Genomic_DNA"/>
</dbReference>
<dbReference type="EMBL" id="AC006224">
    <property type="protein sequence ID" value="AAM15163.1"/>
    <property type="molecule type" value="Genomic_DNA"/>
</dbReference>
<dbReference type="EMBL" id="CP002685">
    <property type="protein sequence ID" value="AEC10207.1"/>
    <property type="molecule type" value="Genomic_DNA"/>
</dbReference>
<dbReference type="EMBL" id="AY035158">
    <property type="protein sequence ID" value="AAK59662.1"/>
    <property type="molecule type" value="mRNA"/>
</dbReference>
<dbReference type="EMBL" id="AY063029">
    <property type="protein sequence ID" value="AAL34203.1"/>
    <property type="molecule type" value="mRNA"/>
</dbReference>
<dbReference type="EMBL" id="AY087084">
    <property type="protein sequence ID" value="AAM64645.1"/>
    <property type="molecule type" value="mRNA"/>
</dbReference>
<dbReference type="PIR" id="H84861">
    <property type="entry name" value="H84861"/>
</dbReference>
<dbReference type="RefSeq" id="NP_181837.1">
    <molecule id="Q9ZW85-1"/>
    <property type="nucleotide sequence ID" value="NM_129870.3"/>
</dbReference>
<dbReference type="SMR" id="Q9ZW85"/>
<dbReference type="BioGRID" id="4248">
    <property type="interactions" value="6"/>
</dbReference>
<dbReference type="FunCoup" id="Q9ZW85">
    <property type="interactions" value="899"/>
</dbReference>
<dbReference type="STRING" id="3702.Q9ZW85"/>
<dbReference type="iPTMnet" id="Q9ZW85"/>
<dbReference type="MetOSite" id="Q9ZW85"/>
<dbReference type="PaxDb" id="3702-AT2G43090.1"/>
<dbReference type="ProteomicsDB" id="250743">
    <molecule id="Q9ZW85-1"/>
</dbReference>
<dbReference type="EnsemblPlants" id="AT2G43090.1">
    <molecule id="Q9ZW85-1"/>
    <property type="protein sequence ID" value="AT2G43090.1"/>
    <property type="gene ID" value="AT2G43090"/>
</dbReference>
<dbReference type="GeneID" id="818911"/>
<dbReference type="Gramene" id="AT2G43090.1">
    <molecule id="Q9ZW85-1"/>
    <property type="protein sequence ID" value="AT2G43090.1"/>
    <property type="gene ID" value="AT2G43090"/>
</dbReference>
<dbReference type="KEGG" id="ath:AT2G43090"/>
<dbReference type="Araport" id="AT2G43090"/>
<dbReference type="TAIR" id="AT2G43090">
    <property type="gene designation" value="IPMI SSU1"/>
</dbReference>
<dbReference type="eggNOG" id="KOG0454">
    <property type="taxonomic scope" value="Eukaryota"/>
</dbReference>
<dbReference type="HOGENOM" id="CLU_081378_1_0_1"/>
<dbReference type="InParanoid" id="Q9ZW85"/>
<dbReference type="OMA" id="NCINLGV"/>
<dbReference type="OrthoDB" id="10262323at2759"/>
<dbReference type="PhylomeDB" id="Q9ZW85"/>
<dbReference type="BioCyc" id="ARA:AT2G43090-MONOMER"/>
<dbReference type="BioCyc" id="MetaCyc:AT2G43090-MONOMER"/>
<dbReference type="BRENDA" id="4.2.1.170">
    <property type="organism ID" value="399"/>
</dbReference>
<dbReference type="BRENDA" id="4.2.1.33">
    <property type="organism ID" value="399"/>
</dbReference>
<dbReference type="UniPathway" id="UPA00048">
    <property type="reaction ID" value="UER00071"/>
</dbReference>
<dbReference type="CD-CODE" id="4299E36E">
    <property type="entry name" value="Nucleolus"/>
</dbReference>
<dbReference type="PRO" id="PR:Q9ZW85"/>
<dbReference type="Proteomes" id="UP000006548">
    <property type="component" value="Chromosome 2"/>
</dbReference>
<dbReference type="ExpressionAtlas" id="Q9ZW85">
    <property type="expression patterns" value="baseline and differential"/>
</dbReference>
<dbReference type="GO" id="GO:0009507">
    <property type="term" value="C:chloroplast"/>
    <property type="evidence" value="ECO:0007005"/>
    <property type="project" value="TAIR"/>
</dbReference>
<dbReference type="GO" id="GO:0009570">
    <property type="term" value="C:chloroplast stroma"/>
    <property type="evidence" value="ECO:0000314"/>
    <property type="project" value="UniProtKB"/>
</dbReference>
<dbReference type="GO" id="GO:0009536">
    <property type="term" value="C:plastid"/>
    <property type="evidence" value="ECO:0000314"/>
    <property type="project" value="TAIR"/>
</dbReference>
<dbReference type="GO" id="GO:0003861">
    <property type="term" value="F:3-isopropylmalate dehydratase activity"/>
    <property type="evidence" value="ECO:0000314"/>
    <property type="project" value="UniProtKB"/>
</dbReference>
<dbReference type="GO" id="GO:0009658">
    <property type="term" value="P:chloroplast organization"/>
    <property type="evidence" value="ECO:0000315"/>
    <property type="project" value="TAIR"/>
</dbReference>
<dbReference type="GO" id="GO:0048229">
    <property type="term" value="P:gametophyte development"/>
    <property type="evidence" value="ECO:0000315"/>
    <property type="project" value="UniProtKB"/>
</dbReference>
<dbReference type="GO" id="GO:0019761">
    <property type="term" value="P:glucosinolate biosynthetic process"/>
    <property type="evidence" value="ECO:0000315"/>
    <property type="project" value="TAIR"/>
</dbReference>
<dbReference type="GO" id="GO:0009098">
    <property type="term" value="P:L-leucine biosynthetic process"/>
    <property type="evidence" value="ECO:0000315"/>
    <property type="project" value="UniProtKB"/>
</dbReference>
<dbReference type="CDD" id="cd01577">
    <property type="entry name" value="IPMI_Swivel"/>
    <property type="match status" value="1"/>
</dbReference>
<dbReference type="FunFam" id="3.20.19.10:FF:000007">
    <property type="entry name" value="Isopropylmalate/citramalate isomerase small subunit"/>
    <property type="match status" value="1"/>
</dbReference>
<dbReference type="Gene3D" id="3.20.19.10">
    <property type="entry name" value="Aconitase, domain 4"/>
    <property type="match status" value="1"/>
</dbReference>
<dbReference type="InterPro" id="IPR015928">
    <property type="entry name" value="Aconitase/3IPM_dehydase_swvl"/>
</dbReference>
<dbReference type="InterPro" id="IPR000573">
    <property type="entry name" value="AconitaseA/IPMdHydase_ssu_swvl"/>
</dbReference>
<dbReference type="InterPro" id="IPR033940">
    <property type="entry name" value="IPMI_Swivel"/>
</dbReference>
<dbReference type="InterPro" id="IPR050075">
    <property type="entry name" value="LeuD"/>
</dbReference>
<dbReference type="PANTHER" id="PTHR43345:SF2">
    <property type="entry name" value="3-ISOPROPYLMALATE DEHYDRATASE SMALL SUBUNIT 1"/>
    <property type="match status" value="1"/>
</dbReference>
<dbReference type="PANTHER" id="PTHR43345">
    <property type="entry name" value="3-ISOPROPYLMALATE DEHYDRATASE SMALL SUBUNIT 2-RELATED-RELATED"/>
    <property type="match status" value="1"/>
</dbReference>
<dbReference type="Pfam" id="PF00694">
    <property type="entry name" value="Aconitase_C"/>
    <property type="match status" value="1"/>
</dbReference>
<dbReference type="SUPFAM" id="SSF52016">
    <property type="entry name" value="LeuD/IlvD-like"/>
    <property type="match status" value="1"/>
</dbReference>
<name>LEUD3_ARATH</name>
<sequence length="251" mass="26790">MAASLQSANPTLSRTLASPNKPSSFATFRSPFLRFNSTSVASNFKPLVSREASSSFVTRSAAEPQERKTFHGLCYVVGDNIDTDQIIPAEFLTLVPSNPEEYEKLGSYALVGLPASYKERFVQPGEMKTKYSIIIGGENFGCGSSREHAPVCLGAAGAKAVVAQSYARIFFRNSVATGEVYPLDSEVRVCDECTTGDVATVELREGDSILINHTTGKEYKLKPIGDAGPVIDAGGIFAYARKAGMIPSAAA</sequence>
<accession>Q9ZW85</accession>
<gene>
    <name evidence="6" type="primary">SSU1</name>
    <name evidence="7" type="synonym">LEUD3</name>
    <name evidence="11" type="ordered locus">At2g43090</name>
    <name type="ORF">MFL8.15</name>
</gene>
<evidence type="ECO:0000255" key="1"/>
<evidence type="ECO:0000269" key="2">
    <source>
    </source>
</evidence>
<evidence type="ECO:0000269" key="3">
    <source>
    </source>
</evidence>
<evidence type="ECO:0000269" key="4">
    <source>
    </source>
</evidence>
<evidence type="ECO:0000269" key="5">
    <source>
    </source>
</evidence>
<evidence type="ECO:0000303" key="6">
    <source>
    </source>
</evidence>
<evidence type="ECO:0000303" key="7">
    <source>
    </source>
</evidence>
<evidence type="ECO:0000305" key="8"/>
<evidence type="ECO:0000305" key="9">
    <source>
    </source>
</evidence>
<evidence type="ECO:0000305" key="10">
    <source>
    </source>
</evidence>
<evidence type="ECO:0000312" key="11">
    <source>
        <dbReference type="Araport" id="AT2G43090"/>
    </source>
</evidence>